<organism>
    <name type="scientific">Zea mays</name>
    <name type="common">Maize</name>
    <dbReference type="NCBI Taxonomy" id="4577"/>
    <lineage>
        <taxon>Eukaryota</taxon>
        <taxon>Viridiplantae</taxon>
        <taxon>Streptophyta</taxon>
        <taxon>Embryophyta</taxon>
        <taxon>Tracheophyta</taxon>
        <taxon>Spermatophyta</taxon>
        <taxon>Magnoliopsida</taxon>
        <taxon>Liliopsida</taxon>
        <taxon>Poales</taxon>
        <taxon>Poaceae</taxon>
        <taxon>PACMAD clade</taxon>
        <taxon>Panicoideae</taxon>
        <taxon>Andropogonodae</taxon>
        <taxon>Andropogoneae</taxon>
        <taxon>Tripsacinae</taxon>
        <taxon>Zea</taxon>
    </lineage>
</organism>
<evidence type="ECO:0000250" key="1"/>
<evidence type="ECO:0000305" key="2"/>
<reference key="1">
    <citation type="submission" date="1993-07" db="EMBL/GenBank/DDBJ databases">
        <authorList>
            <person name="Close P.S."/>
        </authorList>
    </citation>
    <scope>NUCLEOTIDE SEQUENCE</scope>
    <source>
        <strain>cv. B73</strain>
    </source>
</reference>
<reference key="2">
    <citation type="submission" date="1992-10" db="EMBL/GenBank/DDBJ databases">
        <authorList>
            <person name="Burt W.J."/>
        </authorList>
    </citation>
    <scope>NUCLEOTIDE SEQUENCE [MRNA]</scope>
    <source>
        <strain>cv. MUTIND-FR7205024</strain>
    </source>
</reference>
<proteinExistence type="evidence at transcript level"/>
<accession>Q43298</accession>
<accession>Q43253</accession>
<gene>
    <name type="primary">CPN60II</name>
    <name type="synonym">CPNB</name>
</gene>
<sequence>MYRAAASLASKARQAGSSSAARQVGSRLAWSRNYAAKDIKFGVEARALMLRGVEELADAVKVTMGPKGRNVVIEQSFGAPKVTKDGVTVAKSIEFKDRVKNVGASLVKQVANATNDTAGDGTTCATVLTKAIFTEGCKSVAAGMNAMDLRRGISMAVDAVVTNLKGMARMISTSEEIAQVGTISANGEREIGELIAKAMEKVGKEGVITIADGNTLYNELEVVEGMKLDRGYISPYFITNSKAQKCELEDPLILIHDKKVTNMHAVVKVLEMALKKQRPLLIVAEDVESEALGTLIINKLRAGIKVCAVKAPGFGENRKANLQDLAILTGGEVITEELGMNLENVEPHMLGSCKKVTVSKDDTVILDGAGDKKSIEERADQIRSAVENSTSDYDKEKLQERLAKLSGGVAVLKIGGASEAEVGEKKDRVTDALNATKAAVEEGIVPGGGVALLYASKELDKLQTANFDQKIGVQIIQNALKTPVHTIASNAGVEGAVVVGKLLEQGNTDLGYDAAKDEYVDMVKAGIIDPLKVIRTALVDAASVSSLMTTTESIIVEIPKEEAPAPAMGGMGGMDY</sequence>
<keyword id="KW-0067">ATP-binding</keyword>
<keyword id="KW-0143">Chaperone</keyword>
<keyword id="KW-0496">Mitochondrion</keyword>
<keyword id="KW-0547">Nucleotide-binding</keyword>
<keyword id="KW-1185">Reference proteome</keyword>
<keyword id="KW-0346">Stress response</keyword>
<keyword id="KW-0809">Transit peptide</keyword>
<name>CH62_MAIZE</name>
<dbReference type="EMBL" id="L21008">
    <property type="protein sequence ID" value="AAA33451.1"/>
    <property type="molecule type" value="Genomic_DNA"/>
</dbReference>
<dbReference type="EMBL" id="L21006">
    <property type="protein sequence ID" value="AAA33452.1"/>
    <property type="molecule type" value="mRNA"/>
</dbReference>
<dbReference type="EMBL" id="Z12115">
    <property type="protein sequence ID" value="CAA78101.1"/>
    <property type="molecule type" value="mRNA"/>
</dbReference>
<dbReference type="PIR" id="S26583">
    <property type="entry name" value="S26583"/>
</dbReference>
<dbReference type="RefSeq" id="NP_001105690.1">
    <property type="nucleotide sequence ID" value="NM_001112220.1"/>
</dbReference>
<dbReference type="SMR" id="Q43298"/>
<dbReference type="FunCoup" id="Q43298">
    <property type="interactions" value="2813"/>
</dbReference>
<dbReference type="STRING" id="4577.Q43298"/>
<dbReference type="PaxDb" id="4577-GRMZM2G416120_P01"/>
<dbReference type="EnsemblPlants" id="Zm00001eb046580_T001">
    <property type="protein sequence ID" value="Zm00001eb046580_P001"/>
    <property type="gene ID" value="Zm00001eb046580"/>
</dbReference>
<dbReference type="GeneID" id="542707"/>
<dbReference type="Gramene" id="Zm00001eb046580_T001">
    <property type="protein sequence ID" value="Zm00001eb046580_P001"/>
    <property type="gene ID" value="Zm00001eb046580"/>
</dbReference>
<dbReference type="KEGG" id="zma:542707"/>
<dbReference type="MaizeGDB" id="65675"/>
<dbReference type="eggNOG" id="KOG0356">
    <property type="taxonomic scope" value="Eukaryota"/>
</dbReference>
<dbReference type="HOGENOM" id="CLU_016503_3_0_1"/>
<dbReference type="InParanoid" id="Q43298"/>
<dbReference type="OMA" id="LKDQHMN"/>
<dbReference type="OrthoDB" id="1733909at2759"/>
<dbReference type="Proteomes" id="UP000007305">
    <property type="component" value="Chromosome 1"/>
</dbReference>
<dbReference type="ExpressionAtlas" id="Q43298">
    <property type="expression patterns" value="baseline and differential"/>
</dbReference>
<dbReference type="GO" id="GO:0005739">
    <property type="term" value="C:mitochondrion"/>
    <property type="evidence" value="ECO:0000318"/>
    <property type="project" value="GO_Central"/>
</dbReference>
<dbReference type="GO" id="GO:0005524">
    <property type="term" value="F:ATP binding"/>
    <property type="evidence" value="ECO:0007669"/>
    <property type="project" value="UniProtKB-KW"/>
</dbReference>
<dbReference type="GO" id="GO:0140662">
    <property type="term" value="F:ATP-dependent protein folding chaperone"/>
    <property type="evidence" value="ECO:0007669"/>
    <property type="project" value="InterPro"/>
</dbReference>
<dbReference type="GO" id="GO:0006457">
    <property type="term" value="P:protein folding"/>
    <property type="evidence" value="ECO:0000318"/>
    <property type="project" value="GO_Central"/>
</dbReference>
<dbReference type="GO" id="GO:0042026">
    <property type="term" value="P:protein refolding"/>
    <property type="evidence" value="ECO:0007669"/>
    <property type="project" value="InterPro"/>
</dbReference>
<dbReference type="CDD" id="cd03344">
    <property type="entry name" value="GroEL"/>
    <property type="match status" value="1"/>
</dbReference>
<dbReference type="FunFam" id="1.10.560.10:FF:000001">
    <property type="entry name" value="60 kDa chaperonin"/>
    <property type="match status" value="1"/>
</dbReference>
<dbReference type="FunFam" id="3.50.7.10:FF:000001">
    <property type="entry name" value="60 kDa chaperonin"/>
    <property type="match status" value="1"/>
</dbReference>
<dbReference type="Gene3D" id="3.50.7.10">
    <property type="entry name" value="GroEL"/>
    <property type="match status" value="1"/>
</dbReference>
<dbReference type="Gene3D" id="1.10.560.10">
    <property type="entry name" value="GroEL-like equatorial domain"/>
    <property type="match status" value="1"/>
</dbReference>
<dbReference type="Gene3D" id="3.30.260.10">
    <property type="entry name" value="TCP-1-like chaperonin intermediate domain"/>
    <property type="match status" value="1"/>
</dbReference>
<dbReference type="HAMAP" id="MF_00600">
    <property type="entry name" value="CH60"/>
    <property type="match status" value="1"/>
</dbReference>
<dbReference type="InterPro" id="IPR018370">
    <property type="entry name" value="Chaperonin_Cpn60_CS"/>
</dbReference>
<dbReference type="InterPro" id="IPR001844">
    <property type="entry name" value="Cpn60/GroEL"/>
</dbReference>
<dbReference type="InterPro" id="IPR002423">
    <property type="entry name" value="Cpn60/GroEL/TCP-1"/>
</dbReference>
<dbReference type="InterPro" id="IPR027409">
    <property type="entry name" value="GroEL-like_apical_dom_sf"/>
</dbReference>
<dbReference type="InterPro" id="IPR027413">
    <property type="entry name" value="GROEL-like_equatorial_sf"/>
</dbReference>
<dbReference type="InterPro" id="IPR027410">
    <property type="entry name" value="TCP-1-like_intermed_sf"/>
</dbReference>
<dbReference type="NCBIfam" id="TIGR02348">
    <property type="entry name" value="GroEL"/>
    <property type="match status" value="1"/>
</dbReference>
<dbReference type="NCBIfam" id="NF000592">
    <property type="entry name" value="PRK00013.1"/>
    <property type="match status" value="1"/>
</dbReference>
<dbReference type="NCBIfam" id="NF009487">
    <property type="entry name" value="PRK12849.1"/>
    <property type="match status" value="1"/>
</dbReference>
<dbReference type="NCBIfam" id="NF009488">
    <property type="entry name" value="PRK12850.1"/>
    <property type="match status" value="1"/>
</dbReference>
<dbReference type="NCBIfam" id="NF009489">
    <property type="entry name" value="PRK12851.1"/>
    <property type="match status" value="1"/>
</dbReference>
<dbReference type="PANTHER" id="PTHR45633">
    <property type="entry name" value="60 KDA HEAT SHOCK PROTEIN, MITOCHONDRIAL"/>
    <property type="match status" value="1"/>
</dbReference>
<dbReference type="Pfam" id="PF00118">
    <property type="entry name" value="Cpn60_TCP1"/>
    <property type="match status" value="1"/>
</dbReference>
<dbReference type="PRINTS" id="PR00298">
    <property type="entry name" value="CHAPERONIN60"/>
</dbReference>
<dbReference type="SUPFAM" id="SSF52029">
    <property type="entry name" value="GroEL apical domain-like"/>
    <property type="match status" value="1"/>
</dbReference>
<dbReference type="SUPFAM" id="SSF48592">
    <property type="entry name" value="GroEL equatorial domain-like"/>
    <property type="match status" value="1"/>
</dbReference>
<dbReference type="SUPFAM" id="SSF54849">
    <property type="entry name" value="GroEL-intermediate domain like"/>
    <property type="match status" value="1"/>
</dbReference>
<dbReference type="PROSITE" id="PS00296">
    <property type="entry name" value="CHAPERONINS_CPN60"/>
    <property type="match status" value="1"/>
</dbReference>
<feature type="transit peptide" description="Mitochondrion" evidence="1">
    <location>
        <begin position="1"/>
        <end position="34"/>
    </location>
</feature>
<feature type="chain" id="PRO_0000005015" description="Chaperonin CPN60-2, mitochondrial">
    <location>
        <begin position="35"/>
        <end position="576"/>
    </location>
</feature>
<feature type="sequence conflict" description="In Ref. 2; CAA78101." evidence="2" ref="2">
    <original>T</original>
    <variation>N</variation>
    <location>
        <position position="117"/>
    </location>
</feature>
<feature type="sequence conflict" description="In Ref. 2; CAA78101." evidence="2" ref="2">
    <original>L</original>
    <variation>P</variation>
    <location>
        <position position="248"/>
    </location>
</feature>
<feature type="sequence conflict" description="In Ref. 2; CAA78101." evidence="2" ref="2">
    <original>K</original>
    <variation>R</variation>
    <location>
        <position position="258"/>
    </location>
</feature>
<protein>
    <recommendedName>
        <fullName>Chaperonin CPN60-2, mitochondrial</fullName>
    </recommendedName>
    <alternativeName>
        <fullName>HSP60-2</fullName>
    </alternativeName>
</protein>
<comment type="function">
    <text>Implicated in mitochondrial protein import and macromolecular assembly. May facilitate the correct folding of imported proteins. May also prevent misfolding and promote the refolding and proper assembly of unfolded polypeptides generated under stress conditions in the mitochondrial matrix.</text>
</comment>
<comment type="subcellular location">
    <subcellularLocation>
        <location>Mitochondrion</location>
    </subcellularLocation>
</comment>
<comment type="induction">
    <text>By heat shock.</text>
</comment>
<comment type="similarity">
    <text evidence="2">Belongs to the chaperonin (HSP60) family.</text>
</comment>